<keyword id="KW-1003">Cell membrane</keyword>
<keyword id="KW-0342">GTP-binding</keyword>
<keyword id="KW-0378">Hydrolase</keyword>
<keyword id="KW-0449">Lipoprotein</keyword>
<keyword id="KW-0472">Membrane</keyword>
<keyword id="KW-0488">Methylation</keyword>
<keyword id="KW-0547">Nucleotide-binding</keyword>
<keyword id="KW-0636">Prenylation</keyword>
<feature type="chain" id="PRO_0000082683" description="Ras-like protein 2">
    <location>
        <begin position="1"/>
        <end position="190"/>
    </location>
</feature>
<feature type="propeptide" id="PRO_0000281326" description="Removed in mature form" evidence="1">
    <location>
        <begin position="191"/>
        <end position="193"/>
    </location>
</feature>
<feature type="short sequence motif" description="Effector region">
    <location>
        <begin position="34"/>
        <end position="42"/>
    </location>
</feature>
<feature type="binding site" evidence="1">
    <location>
        <begin position="12"/>
        <end position="19"/>
    </location>
    <ligand>
        <name>GTP</name>
        <dbReference type="ChEBI" id="CHEBI:37565"/>
    </ligand>
</feature>
<feature type="binding site" evidence="1">
    <location>
        <begin position="59"/>
        <end position="63"/>
    </location>
    <ligand>
        <name>GTP</name>
        <dbReference type="ChEBI" id="CHEBI:37565"/>
    </ligand>
</feature>
<feature type="binding site" evidence="1">
    <location>
        <begin position="118"/>
        <end position="121"/>
    </location>
    <ligand>
        <name>GTP</name>
        <dbReference type="ChEBI" id="CHEBI:37565"/>
    </ligand>
</feature>
<feature type="modified residue" description="Cysteine methyl ester" evidence="1">
    <location>
        <position position="190"/>
    </location>
</feature>
<feature type="lipid moiety-binding region" description="S-geranylgeranyl cysteine" evidence="1">
    <location>
        <position position="190"/>
    </location>
</feature>
<comment type="function">
    <text>Ras proteins bind GDP/GTP and possess intrinsic GTPase activity.</text>
</comment>
<comment type="catalytic activity">
    <reaction evidence="2">
        <text>GTP + H2O = GDP + phosphate + H(+)</text>
        <dbReference type="Rhea" id="RHEA:19669"/>
        <dbReference type="ChEBI" id="CHEBI:15377"/>
        <dbReference type="ChEBI" id="CHEBI:15378"/>
        <dbReference type="ChEBI" id="CHEBI:37565"/>
        <dbReference type="ChEBI" id="CHEBI:43474"/>
        <dbReference type="ChEBI" id="CHEBI:58189"/>
        <dbReference type="EC" id="3.6.5.2"/>
    </reaction>
</comment>
<comment type="subcellular location">
    <subcellularLocation>
        <location>Cell membrane</location>
        <topology>Lipid-anchor</topology>
        <orientation>Cytoplasmic side</orientation>
    </subcellularLocation>
    <text>Inner surface of plasma membrane.</text>
</comment>
<comment type="similarity">
    <text evidence="3">Belongs to the small GTPase superfamily. Ras family.</text>
</comment>
<proteinExistence type="evidence at transcript level"/>
<organism>
    <name type="scientific">Physarum polycephalum</name>
    <name type="common">Slime mold</name>
    <dbReference type="NCBI Taxonomy" id="5791"/>
    <lineage>
        <taxon>Eukaryota</taxon>
        <taxon>Amoebozoa</taxon>
        <taxon>Evosea</taxon>
        <taxon>Eumycetozoa</taxon>
        <taxon>Myxogastria</taxon>
        <taxon>Myxogastromycetidae</taxon>
        <taxon>Physariida</taxon>
        <taxon>Physaraceae</taxon>
        <taxon>Physarum</taxon>
    </lineage>
</organism>
<dbReference type="EC" id="3.6.5.2" evidence="2"/>
<dbReference type="EMBL" id="L14275">
    <property type="protein sequence ID" value="AAC37179.1"/>
    <property type="molecule type" value="mRNA"/>
</dbReference>
<dbReference type="PIR" id="S38362">
    <property type="entry name" value="S38362"/>
</dbReference>
<dbReference type="SMR" id="P34726"/>
<dbReference type="GO" id="GO:0005886">
    <property type="term" value="C:plasma membrane"/>
    <property type="evidence" value="ECO:0007669"/>
    <property type="project" value="UniProtKB-SubCell"/>
</dbReference>
<dbReference type="GO" id="GO:0003925">
    <property type="term" value="F:G protein activity"/>
    <property type="evidence" value="ECO:0007669"/>
    <property type="project" value="UniProtKB-EC"/>
</dbReference>
<dbReference type="GO" id="GO:0005525">
    <property type="term" value="F:GTP binding"/>
    <property type="evidence" value="ECO:0007669"/>
    <property type="project" value="UniProtKB-KW"/>
</dbReference>
<dbReference type="GO" id="GO:0007165">
    <property type="term" value="P:signal transduction"/>
    <property type="evidence" value="ECO:0007669"/>
    <property type="project" value="InterPro"/>
</dbReference>
<dbReference type="CDD" id="cd04138">
    <property type="entry name" value="H_N_K_Ras_like"/>
    <property type="match status" value="1"/>
</dbReference>
<dbReference type="FunFam" id="3.40.50.300:FF:000080">
    <property type="entry name" value="Ras-like GTPase Ras1"/>
    <property type="match status" value="1"/>
</dbReference>
<dbReference type="Gene3D" id="3.40.50.300">
    <property type="entry name" value="P-loop containing nucleotide triphosphate hydrolases"/>
    <property type="match status" value="1"/>
</dbReference>
<dbReference type="InterPro" id="IPR027417">
    <property type="entry name" value="P-loop_NTPase"/>
</dbReference>
<dbReference type="InterPro" id="IPR005225">
    <property type="entry name" value="Small_GTP-bd"/>
</dbReference>
<dbReference type="InterPro" id="IPR001806">
    <property type="entry name" value="Small_GTPase"/>
</dbReference>
<dbReference type="InterPro" id="IPR020849">
    <property type="entry name" value="Small_GTPase_Ras-type"/>
</dbReference>
<dbReference type="NCBIfam" id="TIGR00231">
    <property type="entry name" value="small_GTP"/>
    <property type="match status" value="1"/>
</dbReference>
<dbReference type="PANTHER" id="PTHR24070">
    <property type="entry name" value="RAS, DI-RAS, AND RHEB FAMILY MEMBERS OF SMALL GTPASE SUPERFAMILY"/>
    <property type="match status" value="1"/>
</dbReference>
<dbReference type="Pfam" id="PF00071">
    <property type="entry name" value="Ras"/>
    <property type="match status" value="1"/>
</dbReference>
<dbReference type="PRINTS" id="PR00449">
    <property type="entry name" value="RASTRNSFRMNG"/>
</dbReference>
<dbReference type="SMART" id="SM00175">
    <property type="entry name" value="RAB"/>
    <property type="match status" value="1"/>
</dbReference>
<dbReference type="SMART" id="SM00176">
    <property type="entry name" value="RAN"/>
    <property type="match status" value="1"/>
</dbReference>
<dbReference type="SMART" id="SM00173">
    <property type="entry name" value="RAS"/>
    <property type="match status" value="1"/>
</dbReference>
<dbReference type="SMART" id="SM00174">
    <property type="entry name" value="RHO"/>
    <property type="match status" value="1"/>
</dbReference>
<dbReference type="SUPFAM" id="SSF52540">
    <property type="entry name" value="P-loop containing nucleoside triphosphate hydrolases"/>
    <property type="match status" value="1"/>
</dbReference>
<dbReference type="PROSITE" id="PS51421">
    <property type="entry name" value="RAS"/>
    <property type="match status" value="1"/>
</dbReference>
<accession>P34726</accession>
<evidence type="ECO:0000250" key="1"/>
<evidence type="ECO:0000250" key="2">
    <source>
        <dbReference type="UniProtKB" id="P01112"/>
    </source>
</evidence>
<evidence type="ECO:0000305" key="3"/>
<reference key="1">
    <citation type="journal article" date="1993" name="Biochim. Biophys. Acta">
        <title>Nucleotide and predicted amino acid sequence of a new member of the ras gene family from the slime mold Physarum polycephalum.</title>
        <authorList>
            <person name="Kozlowski P."/>
            <person name="Tymowska Z."/>
            <person name="Toczko K."/>
        </authorList>
    </citation>
    <scope>NUCLEOTIDE SEQUENCE [MRNA]</scope>
    <source>
        <strain>LU352</strain>
    </source>
</reference>
<sequence length="193" mass="21634">MAQLEYKLVIVGGGGVGKSALTIQLIQNHFIDEYDPTIEDSYRKQVVIDEETCLLDILDTAGQEEYSAMRDQYMRTGQGFVMVYSITSRSSFDEINAFREQILRVKDKDTVPMVLAGNKCDLASERQVTTNEGQELARAFGCPFVETSAKARLNVEECFYGLVREIRKEVIGDKKGGGGKKKKLMGIDRCKLL</sequence>
<protein>
    <recommendedName>
        <fullName>Ras-like protein 2</fullName>
        <ecNumber evidence="2">3.6.5.2</ecNumber>
    </recommendedName>
</protein>
<name>RAS2_PHYPO</name>
<gene>
    <name type="primary">RAS-2</name>
</gene>